<accession>Q2VYI7</accession>
<feature type="chain" id="PRO_0000336319" description="Imidazoleglycerol-phosphate dehydratase">
    <location>
        <begin position="1"/>
        <end position="199"/>
    </location>
</feature>
<reference key="1">
    <citation type="journal article" date="2005" name="DNA Res.">
        <title>Complete genome sequence of the facultative anaerobic magnetotactic bacterium Magnetospirillum sp. strain AMB-1.</title>
        <authorList>
            <person name="Matsunaga T."/>
            <person name="Okamura Y."/>
            <person name="Fukuda Y."/>
            <person name="Wahyudi A.T."/>
            <person name="Murase Y."/>
            <person name="Takeyama H."/>
        </authorList>
    </citation>
    <scope>NUCLEOTIDE SEQUENCE [LARGE SCALE GENOMIC DNA]</scope>
    <source>
        <strain>ATCC 700264 / AMB-1</strain>
    </source>
</reference>
<comment type="catalytic activity">
    <reaction evidence="1">
        <text>D-erythro-1-(imidazol-4-yl)glycerol 3-phosphate = 3-(imidazol-4-yl)-2-oxopropyl phosphate + H2O</text>
        <dbReference type="Rhea" id="RHEA:11040"/>
        <dbReference type="ChEBI" id="CHEBI:15377"/>
        <dbReference type="ChEBI" id="CHEBI:57766"/>
        <dbReference type="ChEBI" id="CHEBI:58278"/>
        <dbReference type="EC" id="4.2.1.19"/>
    </reaction>
</comment>
<comment type="pathway">
    <text evidence="1">Amino-acid biosynthesis; L-histidine biosynthesis; L-histidine from 5-phospho-alpha-D-ribose 1-diphosphate: step 6/9.</text>
</comment>
<comment type="subcellular location">
    <subcellularLocation>
        <location evidence="1">Cytoplasm</location>
    </subcellularLocation>
</comment>
<comment type="similarity">
    <text evidence="1">Belongs to the imidazoleglycerol-phosphate dehydratase family.</text>
</comment>
<comment type="sequence caution" evidence="2">
    <conflict type="erroneous initiation">
        <sequence resource="EMBL-CDS" id="BAE53338"/>
    </conflict>
</comment>
<gene>
    <name evidence="1" type="primary">hisB</name>
    <name type="ordered locus">amb4534</name>
</gene>
<proteinExistence type="inferred from homology"/>
<dbReference type="EC" id="4.2.1.19" evidence="1"/>
<dbReference type="EMBL" id="AP007255">
    <property type="protein sequence ID" value="BAE53338.1"/>
    <property type="status" value="ALT_INIT"/>
    <property type="molecule type" value="Genomic_DNA"/>
</dbReference>
<dbReference type="RefSeq" id="WP_043747210.1">
    <property type="nucleotide sequence ID" value="NC_007626.1"/>
</dbReference>
<dbReference type="SMR" id="Q2VYI7"/>
<dbReference type="STRING" id="342108.amb4534"/>
<dbReference type="KEGG" id="mag:amb4534"/>
<dbReference type="HOGENOM" id="CLU_044308_3_0_5"/>
<dbReference type="OrthoDB" id="9813612at2"/>
<dbReference type="UniPathway" id="UPA00031">
    <property type="reaction ID" value="UER00011"/>
</dbReference>
<dbReference type="Proteomes" id="UP000007058">
    <property type="component" value="Chromosome"/>
</dbReference>
<dbReference type="GO" id="GO:0005737">
    <property type="term" value="C:cytoplasm"/>
    <property type="evidence" value="ECO:0007669"/>
    <property type="project" value="UniProtKB-SubCell"/>
</dbReference>
<dbReference type="GO" id="GO:0004424">
    <property type="term" value="F:imidazoleglycerol-phosphate dehydratase activity"/>
    <property type="evidence" value="ECO:0007669"/>
    <property type="project" value="UniProtKB-UniRule"/>
</dbReference>
<dbReference type="GO" id="GO:0000105">
    <property type="term" value="P:L-histidine biosynthetic process"/>
    <property type="evidence" value="ECO:0007669"/>
    <property type="project" value="UniProtKB-UniRule"/>
</dbReference>
<dbReference type="CDD" id="cd07914">
    <property type="entry name" value="IGPD"/>
    <property type="match status" value="1"/>
</dbReference>
<dbReference type="FunFam" id="3.30.230.40:FF:000001">
    <property type="entry name" value="Imidazoleglycerol-phosphate dehydratase HisB"/>
    <property type="match status" value="1"/>
</dbReference>
<dbReference type="FunFam" id="3.30.230.40:FF:000003">
    <property type="entry name" value="Imidazoleglycerol-phosphate dehydratase HisB"/>
    <property type="match status" value="1"/>
</dbReference>
<dbReference type="Gene3D" id="3.30.230.40">
    <property type="entry name" value="Imidazole glycerol phosphate dehydratase, domain 1"/>
    <property type="match status" value="2"/>
</dbReference>
<dbReference type="HAMAP" id="MF_00076">
    <property type="entry name" value="HisB"/>
    <property type="match status" value="1"/>
</dbReference>
<dbReference type="InterPro" id="IPR038494">
    <property type="entry name" value="IGPD_sf"/>
</dbReference>
<dbReference type="InterPro" id="IPR000807">
    <property type="entry name" value="ImidazoleglycerolP_deHydtase"/>
</dbReference>
<dbReference type="InterPro" id="IPR020565">
    <property type="entry name" value="ImidazoleglycerP_deHydtase_CS"/>
</dbReference>
<dbReference type="InterPro" id="IPR020568">
    <property type="entry name" value="Ribosomal_Su5_D2-typ_SF"/>
</dbReference>
<dbReference type="NCBIfam" id="NF002106">
    <property type="entry name" value="PRK00951.1-1"/>
    <property type="match status" value="1"/>
</dbReference>
<dbReference type="NCBIfam" id="NF002109">
    <property type="entry name" value="PRK00951.1-5"/>
    <property type="match status" value="1"/>
</dbReference>
<dbReference type="NCBIfam" id="NF002111">
    <property type="entry name" value="PRK00951.2-1"/>
    <property type="match status" value="1"/>
</dbReference>
<dbReference type="NCBIfam" id="NF002114">
    <property type="entry name" value="PRK00951.2-4"/>
    <property type="match status" value="1"/>
</dbReference>
<dbReference type="PANTHER" id="PTHR23133:SF2">
    <property type="entry name" value="IMIDAZOLEGLYCEROL-PHOSPHATE DEHYDRATASE"/>
    <property type="match status" value="1"/>
</dbReference>
<dbReference type="PANTHER" id="PTHR23133">
    <property type="entry name" value="IMIDAZOLEGLYCEROL-PHOSPHATE DEHYDRATASE HIS7"/>
    <property type="match status" value="1"/>
</dbReference>
<dbReference type="Pfam" id="PF00475">
    <property type="entry name" value="IGPD"/>
    <property type="match status" value="1"/>
</dbReference>
<dbReference type="SUPFAM" id="SSF54211">
    <property type="entry name" value="Ribosomal protein S5 domain 2-like"/>
    <property type="match status" value="2"/>
</dbReference>
<dbReference type="PROSITE" id="PS00954">
    <property type="entry name" value="IGP_DEHYDRATASE_1"/>
    <property type="match status" value="1"/>
</dbReference>
<dbReference type="PROSITE" id="PS00955">
    <property type="entry name" value="IGP_DEHYDRATASE_2"/>
    <property type="match status" value="1"/>
</dbReference>
<evidence type="ECO:0000255" key="1">
    <source>
        <dbReference type="HAMAP-Rule" id="MF_00076"/>
    </source>
</evidence>
<evidence type="ECO:0000305" key="2"/>
<sequence length="199" mass="21670">MRKAAITRNTNETSIKVAVDLDGSGKYAVSTGVGFLDHMLEQLSRHSLMDLEVDAKGDLHIDAHHTTEDVGIAIGQAVNQALGDRKGICRYGSAYVPMDEALTRVALDLSNRPYLIWKVAFGRDKLGTMDTELFKEWFQAFAQAAGATLHVESLYGDNDHHIVESCFKALARALREAVEIDPRKADAVPSTKGTLGGSL</sequence>
<organism>
    <name type="scientific">Paramagnetospirillum magneticum (strain ATCC 700264 / AMB-1)</name>
    <name type="common">Magnetospirillum magneticum</name>
    <dbReference type="NCBI Taxonomy" id="342108"/>
    <lineage>
        <taxon>Bacteria</taxon>
        <taxon>Pseudomonadati</taxon>
        <taxon>Pseudomonadota</taxon>
        <taxon>Alphaproteobacteria</taxon>
        <taxon>Rhodospirillales</taxon>
        <taxon>Magnetospirillaceae</taxon>
        <taxon>Paramagnetospirillum</taxon>
    </lineage>
</organism>
<keyword id="KW-0028">Amino-acid biosynthesis</keyword>
<keyword id="KW-0963">Cytoplasm</keyword>
<keyword id="KW-0368">Histidine biosynthesis</keyword>
<keyword id="KW-0456">Lyase</keyword>
<protein>
    <recommendedName>
        <fullName evidence="1">Imidazoleglycerol-phosphate dehydratase</fullName>
        <shortName evidence="1">IGPD</shortName>
        <ecNumber evidence="1">4.2.1.19</ecNumber>
    </recommendedName>
</protein>
<name>HIS7_PARM1</name>